<proteinExistence type="evidence at protein level"/>
<organism>
    <name type="scientific">Mus musculus</name>
    <name type="common">Mouse</name>
    <dbReference type="NCBI Taxonomy" id="10090"/>
    <lineage>
        <taxon>Eukaryota</taxon>
        <taxon>Metazoa</taxon>
        <taxon>Chordata</taxon>
        <taxon>Craniata</taxon>
        <taxon>Vertebrata</taxon>
        <taxon>Euteleostomi</taxon>
        <taxon>Mammalia</taxon>
        <taxon>Eutheria</taxon>
        <taxon>Euarchontoglires</taxon>
        <taxon>Glires</taxon>
        <taxon>Rodentia</taxon>
        <taxon>Myomorpha</taxon>
        <taxon>Muroidea</taxon>
        <taxon>Muridae</taxon>
        <taxon>Murinae</taxon>
        <taxon>Mus</taxon>
        <taxon>Mus</taxon>
    </lineage>
</organism>
<name>STX2_MOUSE</name>
<dbReference type="EMBL" id="D10475">
    <property type="protein sequence ID" value="BAA01278.1"/>
    <property type="molecule type" value="mRNA"/>
</dbReference>
<dbReference type="CCDS" id="CCDS19692.1"/>
<dbReference type="PIR" id="A38216">
    <property type="entry name" value="S51193"/>
</dbReference>
<dbReference type="SMR" id="Q00262"/>
<dbReference type="FunCoup" id="Q00262">
    <property type="interactions" value="270"/>
</dbReference>
<dbReference type="STRING" id="10090.ENSMUSP00000031378"/>
<dbReference type="iPTMnet" id="Q00262"/>
<dbReference type="PhosphoSitePlus" id="Q00262"/>
<dbReference type="SwissPalm" id="Q00262"/>
<dbReference type="jPOST" id="Q00262"/>
<dbReference type="PaxDb" id="10090-ENSMUSP00000031378"/>
<dbReference type="PeptideAtlas" id="Q00262"/>
<dbReference type="ProteomicsDB" id="254608"/>
<dbReference type="Pumba" id="Q00262"/>
<dbReference type="AGR" id="MGI:108059"/>
<dbReference type="MGI" id="MGI:108059">
    <property type="gene designation" value="Stx2"/>
</dbReference>
<dbReference type="eggNOG" id="KOG0810">
    <property type="taxonomic scope" value="Eukaryota"/>
</dbReference>
<dbReference type="InParanoid" id="Q00262"/>
<dbReference type="PhylomeDB" id="Q00262"/>
<dbReference type="ChiTaRS" id="Stx2">
    <property type="organism name" value="mouse"/>
</dbReference>
<dbReference type="PRO" id="PR:Q00262"/>
<dbReference type="Proteomes" id="UP000000589">
    <property type="component" value="Unplaced"/>
</dbReference>
<dbReference type="RNAct" id="Q00262">
    <property type="molecule type" value="protein"/>
</dbReference>
<dbReference type="GO" id="GO:0009986">
    <property type="term" value="C:cell surface"/>
    <property type="evidence" value="ECO:0000314"/>
    <property type="project" value="MGI"/>
</dbReference>
<dbReference type="GO" id="GO:0005911">
    <property type="term" value="C:cell-cell junction"/>
    <property type="evidence" value="ECO:0000314"/>
    <property type="project" value="MGI"/>
</dbReference>
<dbReference type="GO" id="GO:0031410">
    <property type="term" value="C:cytoplasmic vesicle"/>
    <property type="evidence" value="ECO:0000314"/>
    <property type="project" value="MGI"/>
</dbReference>
<dbReference type="GO" id="GO:0045121">
    <property type="term" value="C:membrane raft"/>
    <property type="evidence" value="ECO:0000314"/>
    <property type="project" value="MGI"/>
</dbReference>
<dbReference type="GO" id="GO:0048306">
    <property type="term" value="F:calcium-dependent protein binding"/>
    <property type="evidence" value="ECO:0000353"/>
    <property type="project" value="HGNC-UCL"/>
</dbReference>
<dbReference type="GO" id="GO:0005484">
    <property type="term" value="F:SNAP receptor activity"/>
    <property type="evidence" value="ECO:0007669"/>
    <property type="project" value="InterPro"/>
</dbReference>
<dbReference type="GO" id="GO:0007340">
    <property type="term" value="P:acrosome reaction"/>
    <property type="evidence" value="ECO:0000314"/>
    <property type="project" value="HGNC-UCL"/>
</dbReference>
<dbReference type="GO" id="GO:0030154">
    <property type="term" value="P:cell differentiation"/>
    <property type="evidence" value="ECO:0000314"/>
    <property type="project" value="MGI"/>
</dbReference>
<dbReference type="GO" id="GO:0007566">
    <property type="term" value="P:embryo implantation"/>
    <property type="evidence" value="ECO:0000305"/>
    <property type="project" value="MGI"/>
</dbReference>
<dbReference type="GO" id="GO:0006886">
    <property type="term" value="P:intracellular protein transport"/>
    <property type="evidence" value="ECO:0007669"/>
    <property type="project" value="InterPro"/>
</dbReference>
<dbReference type="GO" id="GO:0016192">
    <property type="term" value="P:vesicle-mediated transport"/>
    <property type="evidence" value="ECO:0007669"/>
    <property type="project" value="InterPro"/>
</dbReference>
<dbReference type="CDD" id="cd15882">
    <property type="entry name" value="SNARE_syntaxin2"/>
    <property type="match status" value="1"/>
</dbReference>
<dbReference type="CDD" id="cd00179">
    <property type="entry name" value="SynN"/>
    <property type="match status" value="1"/>
</dbReference>
<dbReference type="FunFam" id="1.20.5.110:FF:000005">
    <property type="entry name" value="Syntaxin 1B"/>
    <property type="match status" value="1"/>
</dbReference>
<dbReference type="FunFam" id="1.20.58.70:FF:000001">
    <property type="entry name" value="Syntaxin 3"/>
    <property type="match status" value="1"/>
</dbReference>
<dbReference type="Gene3D" id="1.20.5.110">
    <property type="match status" value="1"/>
</dbReference>
<dbReference type="Gene3D" id="1.20.58.70">
    <property type="match status" value="1"/>
</dbReference>
<dbReference type="InterPro" id="IPR010989">
    <property type="entry name" value="SNARE"/>
</dbReference>
<dbReference type="InterPro" id="IPR028671">
    <property type="entry name" value="STX2_SNARE"/>
</dbReference>
<dbReference type="InterPro" id="IPR045242">
    <property type="entry name" value="Syntaxin"/>
</dbReference>
<dbReference type="InterPro" id="IPR006012">
    <property type="entry name" value="Syntaxin/epimorphin_CS"/>
</dbReference>
<dbReference type="InterPro" id="IPR006011">
    <property type="entry name" value="Syntaxin_N"/>
</dbReference>
<dbReference type="InterPro" id="IPR000727">
    <property type="entry name" value="T_SNARE_dom"/>
</dbReference>
<dbReference type="PANTHER" id="PTHR19957">
    <property type="entry name" value="SYNTAXIN"/>
    <property type="match status" value="1"/>
</dbReference>
<dbReference type="PANTHER" id="PTHR19957:SF36">
    <property type="entry name" value="SYNTAXIN-2"/>
    <property type="match status" value="1"/>
</dbReference>
<dbReference type="Pfam" id="PF05739">
    <property type="entry name" value="SNARE"/>
    <property type="match status" value="1"/>
</dbReference>
<dbReference type="Pfam" id="PF00804">
    <property type="entry name" value="Syntaxin"/>
    <property type="match status" value="1"/>
</dbReference>
<dbReference type="SMART" id="SM00503">
    <property type="entry name" value="SynN"/>
    <property type="match status" value="1"/>
</dbReference>
<dbReference type="SMART" id="SM00397">
    <property type="entry name" value="t_SNARE"/>
    <property type="match status" value="1"/>
</dbReference>
<dbReference type="SUPFAM" id="SSF47661">
    <property type="entry name" value="t-snare proteins"/>
    <property type="match status" value="1"/>
</dbReference>
<dbReference type="PROSITE" id="PS00914">
    <property type="entry name" value="SYNTAXIN"/>
    <property type="match status" value="1"/>
</dbReference>
<dbReference type="PROSITE" id="PS50192">
    <property type="entry name" value="T_SNARE"/>
    <property type="match status" value="1"/>
</dbReference>
<comment type="function">
    <text evidence="3 4">Essential for epithelial morphogenesis. May mediate Ca(2+)-regulation of exocytosis acrosomal reaction in sperm.</text>
</comment>
<comment type="subunit">
    <text evidence="3">Interacts with SYT6 and SYT8; the interaction is Ca(2+)-dependent.</text>
</comment>
<comment type="subcellular location">
    <subcellularLocation>
        <location>Membrane</location>
        <topology>Single-pass type IV membrane protein</topology>
    </subcellularLocation>
</comment>
<comment type="similarity">
    <text evidence="5">Belongs to the syntaxin family.</text>
</comment>
<gene>
    <name type="primary">Stx2</name>
    <name type="synonym">Epim</name>
</gene>
<feature type="chain" id="PRO_0000210197" description="Syntaxin-2">
    <location>
        <begin position="1"/>
        <end position="289"/>
    </location>
</feature>
<feature type="topological domain" description="Cytoplasmic" evidence="1">
    <location>
        <begin position="1"/>
        <end position="265"/>
    </location>
</feature>
<feature type="transmembrane region" description="Helical; Anchor for type IV membrane protein" evidence="1">
    <location>
        <begin position="266"/>
        <end position="289"/>
    </location>
</feature>
<feature type="domain" description="t-SNARE coiled-coil homology" evidence="2">
    <location>
        <begin position="192"/>
        <end position="254"/>
    </location>
</feature>
<feature type="coiled-coil region" evidence="1">
    <location>
        <begin position="68"/>
        <end position="101"/>
    </location>
</feature>
<reference key="1">
    <citation type="journal article" date="1992" name="Cell">
        <title>Epimorphin: a mesenchymal protein essential for epithelial morphogenesis.</title>
        <authorList>
            <person name="Hirai Y."/>
            <person name="Takebe K."/>
            <person name="Takashina M."/>
            <person name="Kobayashi S."/>
            <person name="Takeichi M."/>
        </authorList>
    </citation>
    <scope>NUCLEOTIDE SEQUENCE [MRNA]</scope>
</reference>
<reference key="2">
    <citation type="journal article" date="1994" name="Eur. J. Biochem.">
        <title>Sodium-dodecyl-sulfate-resistant complex formation of epimorphin monomers and interaction of the 150-kDa complex with the cell surface.</title>
        <authorList>
            <person name="Hirai Y."/>
        </authorList>
    </citation>
    <scope>FUNCTION</scope>
</reference>
<reference key="3">
    <citation type="journal article" date="2005" name="J. Biol. Chem.">
        <title>Synaptotagmin VI and VIII and syntaxin 2 are essential for the mouse sperm acrosome reaction.</title>
        <authorList>
            <person name="Hutt D.M."/>
            <person name="Baltz J.M."/>
            <person name="Ngsee J.K."/>
        </authorList>
    </citation>
    <scope>FUNCTION</scope>
    <scope>INTERACTION WITH SYT6 AND SYT8</scope>
</reference>
<reference key="4">
    <citation type="journal article" date="2010" name="Cell">
        <title>A tissue-specific atlas of mouse protein phosphorylation and expression.</title>
        <authorList>
            <person name="Huttlin E.L."/>
            <person name="Jedrychowski M.P."/>
            <person name="Elias J.E."/>
            <person name="Goswami T."/>
            <person name="Rad R."/>
            <person name="Beausoleil S.A."/>
            <person name="Villen J."/>
            <person name="Haas W."/>
            <person name="Sowa M.E."/>
            <person name="Gygi S.P."/>
        </authorList>
    </citation>
    <scope>IDENTIFICATION BY MASS SPECTROMETRY [LARGE SCALE ANALYSIS]</scope>
    <source>
        <tissue>Heart</tissue>
        <tissue>Lung</tissue>
        <tissue>Testis</tissue>
    </source>
</reference>
<protein>
    <recommendedName>
        <fullName>Syntaxin-2</fullName>
    </recommendedName>
    <alternativeName>
        <fullName>Epimorphin</fullName>
    </alternativeName>
</protein>
<accession>Q00262</accession>
<evidence type="ECO:0000255" key="1"/>
<evidence type="ECO:0000255" key="2">
    <source>
        <dbReference type="PROSITE-ProRule" id="PRU00202"/>
    </source>
</evidence>
<evidence type="ECO:0000269" key="3">
    <source>
    </source>
</evidence>
<evidence type="ECO:0000269" key="4">
    <source>
    </source>
</evidence>
<evidence type="ECO:0000305" key="5"/>
<sequence>MRDRLPDLTACRTNDDGDTAVVIVEKDHFMDGFFHQVEEIRSSIARIAQHVEDVKKNHSIILSAPNPEGKIKEELEDLDKEIKKTANRIRGKLKSIEQSCDQDENGNRTSVDLRIRRTQHSVLSRKFVDVMTEYNEAQILFRERSKGRIQRQLEITGRTTTDDELEEMLESGKPSIFISDIISDSQITRQALNEIESRHKDIMKLETSIRELHEMFMDMAMFVETQGEMVNNIERNVVNSVDYVEHAKEETKKAIKYQSKARRKKWIIAAVAVAVIAVLALIIGLSVGK</sequence>
<keyword id="KW-0175">Coiled coil</keyword>
<keyword id="KW-0472">Membrane</keyword>
<keyword id="KW-1185">Reference proteome</keyword>
<keyword id="KW-0812">Transmembrane</keyword>
<keyword id="KW-1133">Transmembrane helix</keyword>